<comment type="function">
    <text evidence="1">Mediates chemotaxis towards compatible osmolytes. Probably transduces the signal from the substrate-binding protein CosB to the histidine kinase CheA (By similarity).</text>
</comment>
<comment type="subcellular location">
    <subcellularLocation>
        <location evidence="1">Cell membrane</location>
        <topology evidence="1">Multi-pass membrane protein</topology>
    </subcellularLocation>
</comment>
<comment type="PTM">
    <text evidence="1">Methylated by CheR.</text>
</comment>
<comment type="similarity">
    <text evidence="6">Belongs to the methyl-accepting chemotaxis (MCP) protein family.</text>
</comment>
<evidence type="ECO:0000250" key="1"/>
<evidence type="ECO:0000255" key="2"/>
<evidence type="ECO:0000255" key="3">
    <source>
        <dbReference type="PROSITE-ProRule" id="PRU00102"/>
    </source>
</evidence>
<evidence type="ECO:0000255" key="4">
    <source>
        <dbReference type="PROSITE-ProRule" id="PRU00284"/>
    </source>
</evidence>
<evidence type="ECO:0000256" key="5">
    <source>
        <dbReference type="SAM" id="MobiDB-lite"/>
    </source>
</evidence>
<evidence type="ECO:0000305" key="6"/>
<reference key="1">
    <citation type="journal article" date="1996" name="FEMS Microbiol. Lett.">
        <title>A family of halobacterial transducer proteins.</title>
        <authorList>
            <person name="Rudolph J."/>
            <person name="Nordmann B."/>
            <person name="Storch K.F."/>
            <person name="Gruenberg H."/>
            <person name="Rodewald K."/>
            <person name="Oesterhelt D."/>
        </authorList>
    </citation>
    <scope>NUCLEOTIDE SEQUENCE [GENOMIC DNA]</scope>
    <source>
        <strain>R1 / S9</strain>
    </source>
</reference>
<reference key="2">
    <citation type="journal article" date="2000" name="Proc. Natl. Acad. Sci. U.S.A.">
        <title>Genome sequence of Halobacterium species NRC-1.</title>
        <authorList>
            <person name="Ng W.V."/>
            <person name="Kennedy S.P."/>
            <person name="Mahairas G.G."/>
            <person name="Berquist B."/>
            <person name="Pan M."/>
            <person name="Shukla H.D."/>
            <person name="Lasky S.R."/>
            <person name="Baliga N.S."/>
            <person name="Thorsson V."/>
            <person name="Sbrogna J."/>
            <person name="Swartzell S."/>
            <person name="Weir D."/>
            <person name="Hall J."/>
            <person name="Dahl T.A."/>
            <person name="Welti R."/>
            <person name="Goo Y.A."/>
            <person name="Leithauser B."/>
            <person name="Keller K."/>
            <person name="Cruz R."/>
            <person name="Danson M.J."/>
            <person name="Hough D.W."/>
            <person name="Maddocks D.G."/>
            <person name="Jablonski P.E."/>
            <person name="Krebs M.P."/>
            <person name="Angevine C.M."/>
            <person name="Dale H."/>
            <person name="Isenbarger T.A."/>
            <person name="Peck R.F."/>
            <person name="Pohlschroder M."/>
            <person name="Spudich J.L."/>
            <person name="Jung K.-H."/>
            <person name="Alam M."/>
            <person name="Freitas T."/>
            <person name="Hou S."/>
            <person name="Daniels C.J."/>
            <person name="Dennis P.P."/>
            <person name="Omer A.D."/>
            <person name="Ebhardt H."/>
            <person name="Lowe T.M."/>
            <person name="Liang P."/>
            <person name="Riley M."/>
            <person name="Hood L."/>
            <person name="DasSarma S."/>
        </authorList>
    </citation>
    <scope>NUCLEOTIDE SEQUENCE [LARGE SCALE GENOMIC DNA]</scope>
    <source>
        <strain>ATCC 700922 / JCM 11081 / NRC-1</strain>
    </source>
</reference>
<dbReference type="EMBL" id="X95589">
    <property type="protein sequence ID" value="CAA64841.1"/>
    <property type="molecule type" value="Genomic_DNA"/>
</dbReference>
<dbReference type="EMBL" id="AE004437">
    <property type="protein sequence ID" value="AAG19986.1"/>
    <property type="molecule type" value="Genomic_DNA"/>
</dbReference>
<dbReference type="PIR" id="F84327">
    <property type="entry name" value="F84327"/>
</dbReference>
<dbReference type="PIR" id="T46810">
    <property type="entry name" value="T46810"/>
</dbReference>
<dbReference type="RefSeq" id="WP_010903284.1">
    <property type="nucleotide sequence ID" value="NC_002607.1"/>
</dbReference>
<dbReference type="SMR" id="Q9HP84"/>
<dbReference type="STRING" id="64091.VNG_1760G"/>
<dbReference type="PaxDb" id="64091-VNG_1760G"/>
<dbReference type="GeneID" id="89343080"/>
<dbReference type="KEGG" id="hal:VNG_1760G"/>
<dbReference type="PATRIC" id="fig|64091.14.peg.1341"/>
<dbReference type="HOGENOM" id="CLU_000445_107_19_2"/>
<dbReference type="InParanoid" id="Q9HP84"/>
<dbReference type="OrthoDB" id="8523at2157"/>
<dbReference type="PhylomeDB" id="Q9HP84"/>
<dbReference type="Proteomes" id="UP000000554">
    <property type="component" value="Chromosome"/>
</dbReference>
<dbReference type="GO" id="GO:0005886">
    <property type="term" value="C:plasma membrane"/>
    <property type="evidence" value="ECO:0007669"/>
    <property type="project" value="UniProtKB-SubCell"/>
</dbReference>
<dbReference type="GO" id="GO:0006935">
    <property type="term" value="P:chemotaxis"/>
    <property type="evidence" value="ECO:0000318"/>
    <property type="project" value="GO_Central"/>
</dbReference>
<dbReference type="GO" id="GO:0007165">
    <property type="term" value="P:signal transduction"/>
    <property type="evidence" value="ECO:0007669"/>
    <property type="project" value="UniProtKB-KW"/>
</dbReference>
<dbReference type="CDD" id="cd06225">
    <property type="entry name" value="HAMP"/>
    <property type="match status" value="1"/>
</dbReference>
<dbReference type="CDD" id="cd11386">
    <property type="entry name" value="MCP_signal"/>
    <property type="match status" value="1"/>
</dbReference>
<dbReference type="Gene3D" id="6.10.250.1910">
    <property type="match status" value="1"/>
</dbReference>
<dbReference type="Gene3D" id="1.10.287.950">
    <property type="entry name" value="Methyl-accepting chemotaxis protein"/>
    <property type="match status" value="1"/>
</dbReference>
<dbReference type="InterPro" id="IPR003660">
    <property type="entry name" value="HAMP_dom"/>
</dbReference>
<dbReference type="InterPro" id="IPR004089">
    <property type="entry name" value="MCPsignal_dom"/>
</dbReference>
<dbReference type="PANTHER" id="PTHR32089:SF112">
    <property type="entry name" value="LYSOZYME-LIKE PROTEIN-RELATED"/>
    <property type="match status" value="1"/>
</dbReference>
<dbReference type="PANTHER" id="PTHR32089">
    <property type="entry name" value="METHYL-ACCEPTING CHEMOTAXIS PROTEIN MCPB"/>
    <property type="match status" value="1"/>
</dbReference>
<dbReference type="Pfam" id="PF00672">
    <property type="entry name" value="HAMP"/>
    <property type="match status" value="1"/>
</dbReference>
<dbReference type="Pfam" id="PF00015">
    <property type="entry name" value="MCPsignal"/>
    <property type="match status" value="1"/>
</dbReference>
<dbReference type="SMART" id="SM00304">
    <property type="entry name" value="HAMP"/>
    <property type="match status" value="3"/>
</dbReference>
<dbReference type="SMART" id="SM00283">
    <property type="entry name" value="MA"/>
    <property type="match status" value="1"/>
</dbReference>
<dbReference type="SUPFAM" id="SSF158472">
    <property type="entry name" value="HAMP domain-like"/>
    <property type="match status" value="1"/>
</dbReference>
<dbReference type="SUPFAM" id="SSF58104">
    <property type="entry name" value="Methyl-accepting chemotaxis protein (MCP) signaling domain"/>
    <property type="match status" value="1"/>
</dbReference>
<dbReference type="PROSITE" id="PS50111">
    <property type="entry name" value="CHEMOTAXIS_TRANSDUC_2"/>
    <property type="match status" value="1"/>
</dbReference>
<dbReference type="PROSITE" id="PS50885">
    <property type="entry name" value="HAMP"/>
    <property type="match status" value="2"/>
</dbReference>
<protein>
    <recommendedName>
        <fullName>Transducer protein CosT</fullName>
    </recommendedName>
    <alternativeName>
        <fullName>Compatible solute transducer protein</fullName>
    </alternativeName>
    <alternativeName>
        <fullName>HTP IV</fullName>
    </alternativeName>
</protein>
<organism>
    <name type="scientific">Halobacterium salinarum (strain ATCC 700922 / JCM 11081 / NRC-1)</name>
    <name type="common">Halobacterium halobium</name>
    <dbReference type="NCBI Taxonomy" id="64091"/>
    <lineage>
        <taxon>Archaea</taxon>
        <taxon>Methanobacteriati</taxon>
        <taxon>Methanobacteriota</taxon>
        <taxon>Stenosarchaea group</taxon>
        <taxon>Halobacteria</taxon>
        <taxon>Halobacteriales</taxon>
        <taxon>Halobacteriaceae</taxon>
        <taxon>Halobacterium</taxon>
        <taxon>Halobacterium salinarum NRC-34001</taxon>
    </lineage>
</organism>
<accession>Q9HP84</accession>
<accession>Q48317</accession>
<feature type="chain" id="PRO_0000110551" description="Transducer protein CosT">
    <location>
        <begin position="1"/>
        <end position="810"/>
    </location>
</feature>
<feature type="topological domain" description="Cytoplasmic" evidence="2">
    <location>
        <begin position="1"/>
        <end position="38"/>
    </location>
</feature>
<feature type="transmembrane region" description="Helical" evidence="2">
    <location>
        <begin position="39"/>
        <end position="59"/>
    </location>
</feature>
<feature type="topological domain" description="Extracellular" evidence="2">
    <location>
        <begin position="60"/>
        <end position="323"/>
    </location>
</feature>
<feature type="transmembrane region" description="Helical" evidence="2">
    <location>
        <begin position="324"/>
        <end position="344"/>
    </location>
</feature>
<feature type="topological domain" description="Cytoplasmic" evidence="2">
    <location>
        <begin position="345"/>
        <end position="810"/>
    </location>
</feature>
<feature type="domain" description="HAMP 1" evidence="3">
    <location>
        <begin position="345"/>
        <end position="397"/>
    </location>
</feature>
<feature type="domain" description="HAMP 2" evidence="3">
    <location>
        <begin position="439"/>
        <end position="493"/>
    </location>
</feature>
<feature type="domain" description="Methyl-accepting transducer" evidence="4">
    <location>
        <begin position="512"/>
        <end position="748"/>
    </location>
</feature>
<feature type="region of interest" description="Disordered" evidence="5">
    <location>
        <begin position="403"/>
        <end position="427"/>
    </location>
</feature>
<feature type="region of interest" description="Disordered" evidence="5">
    <location>
        <begin position="751"/>
        <end position="784"/>
    </location>
</feature>
<feature type="compositionally biased region" description="Basic and acidic residues" evidence="5">
    <location>
        <begin position="414"/>
        <end position="427"/>
    </location>
</feature>
<feature type="compositionally biased region" description="Low complexity" evidence="5">
    <location>
        <begin position="755"/>
        <end position="774"/>
    </location>
</feature>
<feature type="compositionally biased region" description="Polar residues" evidence="5">
    <location>
        <begin position="775"/>
        <end position="784"/>
    </location>
</feature>
<feature type="modified residue" description="Glutamate methyl ester (Glu)" evidence="1">
    <location>
        <position position="556"/>
    </location>
</feature>
<feature type="modified residue" description="Glutamate methyl ester (Glu)" evidence="1">
    <location>
        <position position="739"/>
    </location>
</feature>
<feature type="sequence conflict" description="In Ref. 1; CAA64841." evidence="6" ref="1">
    <original>A</original>
    <variation>G</variation>
    <location>
        <position position="19"/>
    </location>
</feature>
<feature type="sequence conflict" description="In Ref. 1; CAA64841." evidence="6" ref="1">
    <original>T</original>
    <variation>S</variation>
    <location>
        <position position="592"/>
    </location>
</feature>
<feature type="sequence conflict" description="In Ref. 1; CAA64841." evidence="6" ref="1">
    <original>A</original>
    <variation>S</variation>
    <location>
        <position position="735"/>
    </location>
</feature>
<keyword id="KW-1003">Cell membrane</keyword>
<keyword id="KW-0145">Chemotaxis</keyword>
<keyword id="KW-0472">Membrane</keyword>
<keyword id="KW-0488">Methylation</keyword>
<keyword id="KW-1185">Reference proteome</keyword>
<keyword id="KW-0677">Repeat</keyword>
<keyword id="KW-0807">Transducer</keyword>
<keyword id="KW-0812">Transmembrane</keyword>
<keyword id="KW-1133">Transmembrane helix</keyword>
<gene>
    <name type="primary">cosT</name>
    <name type="synonym">htpIV</name>
    <name type="synonym">htr5</name>
    <name type="ordered locus">VNG_1760G</name>
</gene>
<sequence length="810" mass="85219">MSEPTADAGDNSPSSTDTAPLDRVKAIALLPLRSYLVKFAVALLVILVIIAAGGFWVQADATATLEANTEQQLEQEAVSDATEIGDWLERNEQSVLIASNNPRLGFNTTAADKQAYVTQLVAAELDADRIADVHVADPTVGGASDARIVASTDEDARGTRVSADTHPWVDRTRSIGRDTVVSTNPYRTAGGQRVVSSMSVAADLTHVLVVEYTAGDLSDQFGAGIDGTFTQVVRPTSDATAVLFSDAGTDAVGQPYIPDRSQSEIPALDSATEQGQFTNTPTKDSVLDREYVAAYTTVPGKNWVVVKHAPSESAFALSNQIRTGILGFILVALVGVVLVGGTIGRNTAAAVQSLSAAAAEIEAGNYDVDVASSRRDEIGQLFASIGSMRDALVTQIDEAEAAREQATEAQQDAEAERERAEDARERAEDAKADAEALAAELEAQAERYSDVMAACADGDLTRRMPADDTDNEAMAAIAASFNEMLAQWEHTIIDIQEFADAVATASEEAEVGAADAERASGQVSESVQEIAGAADEQRNMLDTVSGEMTDLSAAIEEVAASADSVAEHSHQTAEIARDGEQTAEDAIERSLTVQEAIDATVQNVEALDDQMAEISEIVDLISDIAEQTNMLALNANIEAARADKSGDGFAVVADEVKDLAEETQESAGDIERRITEVQSQTTATVAEARAAEESMDAGIDAVEEVVDAFTAVSDHADETDTGVQEISDTTDDQAASTEEAVSMTEEVADLSDSTAGEAQSVSAAAEEQAASMSEISDSVESLSGQAEQLKALLSEFEVDADRDVTPTQTD</sequence>
<proteinExistence type="inferred from homology"/>
<name>COST_HALSA</name>